<dbReference type="EC" id="2.7.7.68" evidence="1"/>
<dbReference type="EMBL" id="AE008384">
    <property type="protein sequence ID" value="AAM32193.1"/>
    <property type="molecule type" value="Genomic_DNA"/>
</dbReference>
<dbReference type="RefSeq" id="WP_011034415.1">
    <property type="nucleotide sequence ID" value="NC_003901.1"/>
</dbReference>
<dbReference type="PDB" id="2I5E">
    <property type="method" value="X-ray"/>
    <property type="resolution" value="2.10 A"/>
    <property type="chains" value="A/B=1-208"/>
</dbReference>
<dbReference type="PDBsum" id="2I5E"/>
<dbReference type="SMR" id="Q8PU52"/>
<dbReference type="GeneID" id="82161573"/>
<dbReference type="KEGG" id="mma:MM_2497"/>
<dbReference type="PATRIC" id="fig|192952.21.peg.2858"/>
<dbReference type="eggNOG" id="arCOG04472">
    <property type="taxonomic scope" value="Archaea"/>
</dbReference>
<dbReference type="HOGENOM" id="CLU_076569_2_0_2"/>
<dbReference type="UniPathway" id="UPA00071"/>
<dbReference type="EvolutionaryTrace" id="Q8PU52"/>
<dbReference type="Proteomes" id="UP000000595">
    <property type="component" value="Chromosome"/>
</dbReference>
<dbReference type="GO" id="GO:0005525">
    <property type="term" value="F:GTP binding"/>
    <property type="evidence" value="ECO:0007669"/>
    <property type="project" value="UniProtKB-KW"/>
</dbReference>
<dbReference type="GO" id="GO:0043814">
    <property type="term" value="F:phospholactate guanylyltransferase activity"/>
    <property type="evidence" value="ECO:0007669"/>
    <property type="project" value="UniProtKB-EC"/>
</dbReference>
<dbReference type="GO" id="GO:0052645">
    <property type="term" value="P:F420-0 metabolic process"/>
    <property type="evidence" value="ECO:0007669"/>
    <property type="project" value="UniProtKB-UniRule"/>
</dbReference>
<dbReference type="Gene3D" id="6.10.140.50">
    <property type="match status" value="1"/>
</dbReference>
<dbReference type="Gene3D" id="3.90.550.10">
    <property type="entry name" value="Spore Coat Polysaccharide Biosynthesis Protein SpsA, Chain A"/>
    <property type="match status" value="1"/>
</dbReference>
<dbReference type="HAMAP" id="MF_02114">
    <property type="entry name" value="CofC"/>
    <property type="match status" value="1"/>
</dbReference>
<dbReference type="InterPro" id="IPR002835">
    <property type="entry name" value="CofC"/>
</dbReference>
<dbReference type="InterPro" id="IPR029044">
    <property type="entry name" value="Nucleotide-diphossugar_trans"/>
</dbReference>
<dbReference type="NCBIfam" id="TIGR03552">
    <property type="entry name" value="F420_cofC"/>
    <property type="match status" value="1"/>
</dbReference>
<dbReference type="PANTHER" id="PTHR40392">
    <property type="entry name" value="2-PHOSPHO-L-LACTATE GUANYLYLTRANSFERASE"/>
    <property type="match status" value="1"/>
</dbReference>
<dbReference type="PANTHER" id="PTHR40392:SF1">
    <property type="entry name" value="2-PHOSPHO-L-LACTATE GUANYLYLTRANSFERASE"/>
    <property type="match status" value="1"/>
</dbReference>
<dbReference type="Pfam" id="PF01983">
    <property type="entry name" value="CofC"/>
    <property type="match status" value="1"/>
</dbReference>
<dbReference type="SUPFAM" id="SSF53448">
    <property type="entry name" value="Nucleotide-diphospho-sugar transferases"/>
    <property type="match status" value="1"/>
</dbReference>
<accession>Q8PU52</accession>
<protein>
    <recommendedName>
        <fullName evidence="1">2-phospho-L-lactate guanylyltransferase</fullName>
        <shortName evidence="1">LP guanylyltransferase</shortName>
        <ecNumber evidence="1">2.7.7.68</ecNumber>
    </recommendedName>
</protein>
<gene>
    <name evidence="1" type="primary">cofC</name>
    <name type="ordered locus">MM_2497</name>
</gene>
<evidence type="ECO:0000255" key="1">
    <source>
        <dbReference type="HAMAP-Rule" id="MF_02114"/>
    </source>
</evidence>
<evidence type="ECO:0000305" key="2">
    <source ref="2"/>
</evidence>
<evidence type="ECO:0007829" key="3">
    <source>
        <dbReference type="PDB" id="2I5E"/>
    </source>
</evidence>
<sequence length="208" mass="23051">MRAVIPYKKAGAKSRLSPVLSLQEREEFVELMLNQVISSLKGAGIEQVDILSPSVYGLEEMTEARVLLDEKDLNEALNRYLKEAEEPVLIVMADLPLLSPEHIKEISSTEKDVCIVPGKGGGTNALFIKNPSKYRVKYYGSSFLTHCSIATDSGQDFEIYDSFMAGTDIDEPEDLVELLIHGKGAAKDYIESKFRLEVKKGRVGLVPL</sequence>
<keyword id="KW-0002">3D-structure</keyword>
<keyword id="KW-0342">GTP-binding</keyword>
<keyword id="KW-0547">Nucleotide-binding</keyword>
<keyword id="KW-0548">Nucleotidyltransferase</keyword>
<keyword id="KW-0808">Transferase</keyword>
<name>COFC_METMA</name>
<reference key="1">
    <citation type="journal article" date="2002" name="J. Mol. Microbiol. Biotechnol.">
        <title>The genome of Methanosarcina mazei: evidence for lateral gene transfer between Bacteria and Archaea.</title>
        <authorList>
            <person name="Deppenmeier U."/>
            <person name="Johann A."/>
            <person name="Hartsch T."/>
            <person name="Merkl R."/>
            <person name="Schmitz R.A."/>
            <person name="Martinez-Arias R."/>
            <person name="Henne A."/>
            <person name="Wiezer A."/>
            <person name="Baeumer S."/>
            <person name="Jacobi C."/>
            <person name="Brueggemann H."/>
            <person name="Lienard T."/>
            <person name="Christmann A."/>
            <person name="Boemecke M."/>
            <person name="Steckel S."/>
            <person name="Bhattacharyya A."/>
            <person name="Lykidis A."/>
            <person name="Overbeek R."/>
            <person name="Klenk H.-P."/>
            <person name="Gunsalus R.P."/>
            <person name="Fritz H.-J."/>
            <person name="Gottschalk G."/>
        </authorList>
    </citation>
    <scope>NUCLEOTIDE SEQUENCE [LARGE SCALE GENOMIC DNA]</scope>
    <source>
        <strain>ATCC BAA-159 / DSM 3647 / Goe1 / Go1 / JCM 11833 / OCM 88</strain>
    </source>
</reference>
<reference key="2">
    <citation type="submission" date="2009-02" db="PDB data bank">
        <title>The crystal structure of a hypothetical protein MM_2497 from Methanosarcina mazei Go1.</title>
        <authorList>
            <consortium name="Midwest center for structural genomics (MCSG)"/>
        </authorList>
    </citation>
    <scope>X-RAY CRYSTALLOGRAPHY (2.1 ANGSTROMS)</scope>
    <scope>SUBUNIT</scope>
</reference>
<organism>
    <name type="scientific">Methanosarcina mazei (strain ATCC BAA-159 / DSM 3647 / Goe1 / Go1 / JCM 11833 / OCM 88)</name>
    <name type="common">Methanosarcina frisia</name>
    <dbReference type="NCBI Taxonomy" id="192952"/>
    <lineage>
        <taxon>Archaea</taxon>
        <taxon>Methanobacteriati</taxon>
        <taxon>Methanobacteriota</taxon>
        <taxon>Stenosarchaea group</taxon>
        <taxon>Methanomicrobia</taxon>
        <taxon>Methanosarcinales</taxon>
        <taxon>Methanosarcinaceae</taxon>
        <taxon>Methanosarcina</taxon>
    </lineage>
</organism>
<comment type="function">
    <text evidence="1">Guanylyltransferase that catalyzes the activation of (2S)-2-phospholactate (2-PL) as (2S)-lactyl-2-diphospho-5'-guanosine, via the condensation of 2-PL with GTP. It is involved in the biosynthesis of coenzyme F420, a hydride carrier cofactor.</text>
</comment>
<comment type="catalytic activity">
    <reaction evidence="1">
        <text>(2S)-2-phospholactate + GTP + H(+) = (2S)-lactyl-2-diphospho-5'-guanosine + diphosphate</text>
        <dbReference type="Rhea" id="RHEA:63424"/>
        <dbReference type="ChEBI" id="CHEBI:15378"/>
        <dbReference type="ChEBI" id="CHEBI:33019"/>
        <dbReference type="ChEBI" id="CHEBI:37565"/>
        <dbReference type="ChEBI" id="CHEBI:59435"/>
        <dbReference type="ChEBI" id="CHEBI:59906"/>
        <dbReference type="EC" id="2.7.7.68"/>
    </reaction>
</comment>
<comment type="pathway">
    <text evidence="1">Cofactor biosynthesis; coenzyme F420 biosynthesis.</text>
</comment>
<comment type="subunit">
    <text evidence="2">Homodimer.</text>
</comment>
<comment type="similarity">
    <text evidence="1">Belongs to the CofC family.</text>
</comment>
<feature type="chain" id="PRO_0000398757" description="2-phospho-L-lactate guanylyltransferase">
    <location>
        <begin position="1"/>
        <end position="208"/>
    </location>
</feature>
<feature type="strand" evidence="3">
    <location>
        <begin position="2"/>
        <end position="6"/>
    </location>
</feature>
<feature type="turn" evidence="3">
    <location>
        <begin position="10"/>
        <end position="13"/>
    </location>
</feature>
<feature type="helix" evidence="3">
    <location>
        <begin position="14"/>
        <end position="16"/>
    </location>
</feature>
<feature type="turn" evidence="3">
    <location>
        <begin position="17"/>
        <end position="19"/>
    </location>
</feature>
<feature type="helix" evidence="3">
    <location>
        <begin position="22"/>
        <end position="42"/>
    </location>
</feature>
<feature type="strand" evidence="3">
    <location>
        <begin position="48"/>
        <end position="54"/>
    </location>
</feature>
<feature type="strand" evidence="3">
    <location>
        <begin position="63"/>
        <end position="68"/>
    </location>
</feature>
<feature type="helix" evidence="3">
    <location>
        <begin position="73"/>
        <end position="83"/>
    </location>
</feature>
<feature type="strand" evidence="3">
    <location>
        <begin position="88"/>
        <end position="91"/>
    </location>
</feature>
<feature type="helix" evidence="3">
    <location>
        <begin position="100"/>
        <end position="106"/>
    </location>
</feature>
<feature type="strand" evidence="3">
    <location>
        <begin position="110"/>
        <end position="117"/>
    </location>
</feature>
<feature type="helix" evidence="3">
    <location>
        <begin position="119"/>
        <end position="121"/>
    </location>
</feature>
<feature type="strand" evidence="3">
    <location>
        <begin position="123"/>
        <end position="129"/>
    </location>
</feature>
<feature type="helix" evidence="3">
    <location>
        <begin position="131"/>
        <end position="133"/>
    </location>
</feature>
<feature type="strand" evidence="3">
    <location>
        <begin position="139"/>
        <end position="141"/>
    </location>
</feature>
<feature type="helix" evidence="3">
    <location>
        <begin position="142"/>
        <end position="151"/>
    </location>
</feature>
<feature type="turn" evidence="3">
    <location>
        <begin position="152"/>
        <end position="154"/>
    </location>
</feature>
<feature type="strand" evidence="3">
    <location>
        <begin position="157"/>
        <end position="159"/>
    </location>
</feature>
<feature type="turn" evidence="3">
    <location>
        <begin position="163"/>
        <end position="166"/>
    </location>
</feature>
<feature type="helix" evidence="3">
    <location>
        <begin position="172"/>
        <end position="181"/>
    </location>
</feature>
<feature type="helix" evidence="3">
    <location>
        <begin position="185"/>
        <end position="191"/>
    </location>
</feature>
<feature type="strand" evidence="3">
    <location>
        <begin position="194"/>
        <end position="198"/>
    </location>
</feature>
<feature type="strand" evidence="3">
    <location>
        <begin position="200"/>
        <end position="207"/>
    </location>
</feature>
<proteinExistence type="evidence at protein level"/>